<dbReference type="EC" id="2.1.-.-" evidence="1"/>
<dbReference type="EMBL" id="CP000802">
    <property type="protein sequence ID" value="ABV05507.1"/>
    <property type="molecule type" value="Genomic_DNA"/>
</dbReference>
<dbReference type="RefSeq" id="WP_001070350.1">
    <property type="nucleotide sequence ID" value="NC_009800.1"/>
</dbReference>
<dbReference type="GeneID" id="93776367"/>
<dbReference type="KEGG" id="ecx:EcHS_A1168"/>
<dbReference type="HOGENOM" id="CLU_036182_2_0_6"/>
<dbReference type="UniPathway" id="UPA00637"/>
<dbReference type="GO" id="GO:0005886">
    <property type="term" value="C:plasma membrane"/>
    <property type="evidence" value="ECO:0007669"/>
    <property type="project" value="UniProtKB-SubCell"/>
</dbReference>
<dbReference type="GO" id="GO:0016747">
    <property type="term" value="F:acyltransferase activity, transferring groups other than amino-acyl groups"/>
    <property type="evidence" value="ECO:0007669"/>
    <property type="project" value="InterPro"/>
</dbReference>
<dbReference type="GO" id="GO:0016741">
    <property type="term" value="F:transferase activity, transferring one-carbon groups"/>
    <property type="evidence" value="ECO:0007669"/>
    <property type="project" value="UniProtKB-UniRule"/>
</dbReference>
<dbReference type="GO" id="GO:0009250">
    <property type="term" value="P:glucan biosynthetic process"/>
    <property type="evidence" value="ECO:0007669"/>
    <property type="project" value="UniProtKB-UniRule"/>
</dbReference>
<dbReference type="HAMAP" id="MF_01066">
    <property type="entry name" value="MdoC_OpgC"/>
    <property type="match status" value="1"/>
</dbReference>
<dbReference type="InterPro" id="IPR002656">
    <property type="entry name" value="Acyl_transf_3_dom"/>
</dbReference>
<dbReference type="InterPro" id="IPR050623">
    <property type="entry name" value="Glucan_succinyl_AcylTrfase"/>
</dbReference>
<dbReference type="InterPro" id="IPR023723">
    <property type="entry name" value="Glucans_biosynth_C"/>
</dbReference>
<dbReference type="NCBIfam" id="NF003014">
    <property type="entry name" value="PRK03854.1"/>
    <property type="match status" value="1"/>
</dbReference>
<dbReference type="PANTHER" id="PTHR36927">
    <property type="entry name" value="BLR4337 PROTEIN"/>
    <property type="match status" value="1"/>
</dbReference>
<dbReference type="PANTHER" id="PTHR36927:SF3">
    <property type="entry name" value="GLUCANS BIOSYNTHESIS PROTEIN C"/>
    <property type="match status" value="1"/>
</dbReference>
<dbReference type="Pfam" id="PF01757">
    <property type="entry name" value="Acyl_transf_3"/>
    <property type="match status" value="1"/>
</dbReference>
<feature type="chain" id="PRO_1000064511" description="Glucans biosynthesis protein C">
    <location>
        <begin position="1"/>
        <end position="385"/>
    </location>
</feature>
<feature type="transmembrane region" description="Helical" evidence="1">
    <location>
        <begin position="17"/>
        <end position="37"/>
    </location>
</feature>
<feature type="transmembrane region" description="Helical" evidence="1">
    <location>
        <begin position="60"/>
        <end position="80"/>
    </location>
</feature>
<feature type="transmembrane region" description="Helical" evidence="1">
    <location>
        <begin position="91"/>
        <end position="111"/>
    </location>
</feature>
<feature type="transmembrane region" description="Helical" evidence="1">
    <location>
        <begin position="137"/>
        <end position="157"/>
    </location>
</feature>
<feature type="transmembrane region" description="Helical" evidence="1">
    <location>
        <begin position="173"/>
        <end position="193"/>
    </location>
</feature>
<feature type="transmembrane region" description="Helical" evidence="1">
    <location>
        <begin position="212"/>
        <end position="232"/>
    </location>
</feature>
<feature type="transmembrane region" description="Helical" evidence="1">
    <location>
        <begin position="239"/>
        <end position="259"/>
    </location>
</feature>
<feature type="transmembrane region" description="Helical" evidence="1">
    <location>
        <begin position="274"/>
        <end position="294"/>
    </location>
</feature>
<feature type="transmembrane region" description="Helical" evidence="1">
    <location>
        <begin position="311"/>
        <end position="331"/>
    </location>
</feature>
<feature type="transmembrane region" description="Helical" evidence="1">
    <location>
        <begin position="338"/>
        <end position="358"/>
    </location>
</feature>
<proteinExistence type="inferred from homology"/>
<gene>
    <name evidence="1" type="primary">mdoC</name>
    <name evidence="1" type="synonym">opgC</name>
    <name type="ordered locus">EcHS_A1168</name>
</gene>
<keyword id="KW-0012">Acyltransferase</keyword>
<keyword id="KW-1003">Cell membrane</keyword>
<keyword id="KW-0472">Membrane</keyword>
<keyword id="KW-0808">Transferase</keyword>
<keyword id="KW-0812">Transmembrane</keyword>
<keyword id="KW-1133">Transmembrane helix</keyword>
<comment type="function">
    <text evidence="1">Necessary for the succinyl substitution of periplasmic glucans. Could catalyze the transfer of succinyl residues from the cytoplasmic side of the membrane to the nascent glucan backbones on the periplasmic side of the membrane.</text>
</comment>
<comment type="pathway">
    <text evidence="1">Glycan metabolism; osmoregulated periplasmic glucan (OPG) biosynthesis.</text>
</comment>
<comment type="subcellular location">
    <subcellularLocation>
        <location evidence="1">Cell membrane</location>
        <topology evidence="1">Multi-pass membrane protein</topology>
    </subcellularLocation>
</comment>
<comment type="similarity">
    <text evidence="1">Belongs to the acyltransferase 3 family. OpgC subfamily.</text>
</comment>
<evidence type="ECO:0000255" key="1">
    <source>
        <dbReference type="HAMAP-Rule" id="MF_01066"/>
    </source>
</evidence>
<accession>A7ZZ03</accession>
<name>OPGC_ECOHS</name>
<reference key="1">
    <citation type="journal article" date="2008" name="J. Bacteriol.">
        <title>The pangenome structure of Escherichia coli: comparative genomic analysis of E. coli commensal and pathogenic isolates.</title>
        <authorList>
            <person name="Rasko D.A."/>
            <person name="Rosovitz M.J."/>
            <person name="Myers G.S.A."/>
            <person name="Mongodin E.F."/>
            <person name="Fricke W.F."/>
            <person name="Gajer P."/>
            <person name="Crabtree J."/>
            <person name="Sebaihia M."/>
            <person name="Thomson N.R."/>
            <person name="Chaudhuri R."/>
            <person name="Henderson I.R."/>
            <person name="Sperandio V."/>
            <person name="Ravel J."/>
        </authorList>
    </citation>
    <scope>NUCLEOTIDE SEQUENCE [LARGE SCALE GENOMIC DNA]</scope>
    <source>
        <strain>HS</strain>
    </source>
</reference>
<sequence length="385" mass="44700">MNPVPAQREYFLDSIRAWLMLLGIPFHISLIYSSHTWHVNSAEPSLWLTLFNDFIHSFRMQVFFVISGYFSYMLFLRYPLKKWWKVRVERVGIPMLTAIPLLTLPQFIMLQYVKGKAESWPGLSLYDKYNTLAWELISHLWFLLVLVVMTTLCVWIFKRIRNNLENSDKTNKKFSMVKLSVIFLCLGIGYAVIRRTIFIVYPPILSNGMFNFIVMQTLFYLPFFILGALAFIFPHLKALFTTPSRGCTLAAALAFVAYLLNQRYGSGDAWMYETESVITMVLGLWMVNVVFSFGHRLLNFQSARVTYFVNASLFIYLVHHPLTLFFGAYITPHITSNWLGFLCGLIFVVGIAIILYEIHLRIPLLKFLFSGKPVVKRENDKAPAR</sequence>
<protein>
    <recommendedName>
        <fullName evidence="1">Glucans biosynthesis protein C</fullName>
        <ecNumber evidence="1">2.1.-.-</ecNumber>
    </recommendedName>
</protein>
<organism>
    <name type="scientific">Escherichia coli O9:H4 (strain HS)</name>
    <dbReference type="NCBI Taxonomy" id="331112"/>
    <lineage>
        <taxon>Bacteria</taxon>
        <taxon>Pseudomonadati</taxon>
        <taxon>Pseudomonadota</taxon>
        <taxon>Gammaproteobacteria</taxon>
        <taxon>Enterobacterales</taxon>
        <taxon>Enterobacteriaceae</taxon>
        <taxon>Escherichia</taxon>
    </lineage>
</organism>